<sequence>MNVQFPWLTVLTLLPLVAAFFIPVLPDREGKTVRWYALAIALLEFGLSAMVFWRHYDAQSAQFQMVETVPWLPQIGLNWSLAVDGLAVPLILLTGLVNTLAIFAAWQVKQKPRLFYFLMLALYSAQIGVFAAQDLILFFLIWELELVPVYLLISIWGGAQRQYAATKFILYTAVGSLFILIAGLGMAFYGGDFSLNMAALGLKNYPLALELLAYAGFLIAFGVKLPIFPLHTWLPDAHGEASAPVSMVLAGVLLKMGGYGLIRFNLQMLPDAHIYFAPVLIALGVVNIIYGALTAFGQENLKRRLAYSSISHMGFVLLGIGALNGIGLNGAMLQMLSHGLIAAVLFFLAGVTYDRTHTLAMEKMSGIAQSMPKTFALFTASSMASLALPGMSGFVSELTVFLGLTNSDAYSTTFKVGVIFLAAVGVIITPVYLLSMVRRVFTGKQAGDMFDKLLLDINPRETFIALSLLVPIIAVGMYPKVATQTYDVTTTAIARHVHGALPAVAQHHLPLYAQLTQSAPRLFRETTVADNSL</sequence>
<organism>
    <name type="scientific">Thermosynechococcus vestitus (strain NIES-2133 / IAM M-273 / BP-1)</name>
    <dbReference type="NCBI Taxonomy" id="197221"/>
    <lineage>
        <taxon>Bacteria</taxon>
        <taxon>Bacillati</taxon>
        <taxon>Cyanobacteriota</taxon>
        <taxon>Cyanophyceae</taxon>
        <taxon>Acaryochloridales</taxon>
        <taxon>Thermosynechococcaceae</taxon>
        <taxon>Thermosynechococcus</taxon>
    </lineage>
</organism>
<dbReference type="EC" id="7.1.1.-" evidence="1"/>
<dbReference type="EMBL" id="BA000039">
    <property type="protein sequence ID" value="BAC09371.1"/>
    <property type="molecule type" value="Genomic_DNA"/>
</dbReference>
<dbReference type="RefSeq" id="NP_682609.1">
    <property type="nucleotide sequence ID" value="NC_004113.1"/>
</dbReference>
<dbReference type="RefSeq" id="WP_011057656.1">
    <property type="nucleotide sequence ID" value="NC_004113.1"/>
</dbReference>
<dbReference type="SMR" id="Q8DHX4"/>
<dbReference type="STRING" id="197221.gene:10748424"/>
<dbReference type="EnsemblBacteria" id="BAC09371">
    <property type="protein sequence ID" value="BAC09371"/>
    <property type="gene ID" value="BAC09371"/>
</dbReference>
<dbReference type="KEGG" id="tel:tlr1819"/>
<dbReference type="eggNOG" id="COG1008">
    <property type="taxonomic scope" value="Bacteria"/>
</dbReference>
<dbReference type="Proteomes" id="UP000000440">
    <property type="component" value="Chromosome"/>
</dbReference>
<dbReference type="GO" id="GO:0031676">
    <property type="term" value="C:plasma membrane-derived thylakoid membrane"/>
    <property type="evidence" value="ECO:0007669"/>
    <property type="project" value="UniProtKB-SubCell"/>
</dbReference>
<dbReference type="GO" id="GO:0008137">
    <property type="term" value="F:NADH dehydrogenase (ubiquinone) activity"/>
    <property type="evidence" value="ECO:0007669"/>
    <property type="project" value="InterPro"/>
</dbReference>
<dbReference type="GO" id="GO:0048039">
    <property type="term" value="F:ubiquinone binding"/>
    <property type="evidence" value="ECO:0007669"/>
    <property type="project" value="TreeGrafter"/>
</dbReference>
<dbReference type="GO" id="GO:0042773">
    <property type="term" value="P:ATP synthesis coupled electron transport"/>
    <property type="evidence" value="ECO:0007669"/>
    <property type="project" value="InterPro"/>
</dbReference>
<dbReference type="GO" id="GO:0015990">
    <property type="term" value="P:electron transport coupled proton transport"/>
    <property type="evidence" value="ECO:0007669"/>
    <property type="project" value="TreeGrafter"/>
</dbReference>
<dbReference type="HAMAP" id="MF_00491">
    <property type="entry name" value="NDH1_NuoM"/>
    <property type="match status" value="1"/>
</dbReference>
<dbReference type="InterPro" id="IPR022997">
    <property type="entry name" value="NADH_Q_OxRdtase_chain4"/>
</dbReference>
<dbReference type="InterPro" id="IPR010227">
    <property type="entry name" value="NADH_Q_OxRdtase_chainM/4"/>
</dbReference>
<dbReference type="InterPro" id="IPR003918">
    <property type="entry name" value="NADH_UbQ_OxRdtase"/>
</dbReference>
<dbReference type="InterPro" id="IPR001750">
    <property type="entry name" value="ND/Mrp_TM"/>
</dbReference>
<dbReference type="NCBIfam" id="TIGR01972">
    <property type="entry name" value="NDH_I_M"/>
    <property type="match status" value="1"/>
</dbReference>
<dbReference type="NCBIfam" id="NF009212">
    <property type="entry name" value="PRK12561.1"/>
    <property type="match status" value="1"/>
</dbReference>
<dbReference type="PANTHER" id="PTHR43507:SF21">
    <property type="entry name" value="NAD(P)H-QUINONE OXIDOREDUCTASE CHAIN 4, CHLOROPLASTIC"/>
    <property type="match status" value="1"/>
</dbReference>
<dbReference type="PANTHER" id="PTHR43507">
    <property type="entry name" value="NADH-UBIQUINONE OXIDOREDUCTASE CHAIN 4"/>
    <property type="match status" value="1"/>
</dbReference>
<dbReference type="Pfam" id="PF00361">
    <property type="entry name" value="Proton_antipo_M"/>
    <property type="match status" value="1"/>
</dbReference>
<dbReference type="PRINTS" id="PR01437">
    <property type="entry name" value="NUOXDRDTASE4"/>
</dbReference>
<feature type="chain" id="PRO_0000343246" description="NAD(P)H-quinone oxidoreductase chain 4 2">
    <location>
        <begin position="1"/>
        <end position="533"/>
    </location>
</feature>
<feature type="transmembrane region" description="Helical" evidence="1">
    <location>
        <begin position="5"/>
        <end position="25"/>
    </location>
</feature>
<feature type="transmembrane region" description="Helical" evidence="1">
    <location>
        <begin position="33"/>
        <end position="53"/>
    </location>
</feature>
<feature type="transmembrane region" description="Helical" evidence="1">
    <location>
        <begin position="86"/>
        <end position="106"/>
    </location>
</feature>
<feature type="transmembrane region" description="Helical" evidence="1">
    <location>
        <begin position="114"/>
        <end position="134"/>
    </location>
</feature>
<feature type="transmembrane region" description="Helical" evidence="1">
    <location>
        <begin position="135"/>
        <end position="155"/>
    </location>
</feature>
<feature type="transmembrane region" description="Helical" evidence="1">
    <location>
        <begin position="168"/>
        <end position="188"/>
    </location>
</feature>
<feature type="transmembrane region" description="Helical" evidence="1">
    <location>
        <begin position="208"/>
        <end position="228"/>
    </location>
</feature>
<feature type="transmembrane region" description="Helical" evidence="1">
    <location>
        <begin position="242"/>
        <end position="262"/>
    </location>
</feature>
<feature type="transmembrane region" description="Helical" evidence="1">
    <location>
        <begin position="276"/>
        <end position="296"/>
    </location>
</feature>
<feature type="transmembrane region" description="Helical" evidence="1">
    <location>
        <begin position="310"/>
        <end position="330"/>
    </location>
</feature>
<feature type="transmembrane region" description="Helical" evidence="1">
    <location>
        <begin position="331"/>
        <end position="351"/>
    </location>
</feature>
<feature type="transmembrane region" description="Helical" evidence="1">
    <location>
        <begin position="384"/>
        <end position="404"/>
    </location>
</feature>
<feature type="transmembrane region" description="Helical" evidence="1">
    <location>
        <begin position="416"/>
        <end position="436"/>
    </location>
</feature>
<feature type="transmembrane region" description="Helical" evidence="1">
    <location>
        <begin position="462"/>
        <end position="482"/>
    </location>
</feature>
<protein>
    <recommendedName>
        <fullName evidence="1">NAD(P)H-quinone oxidoreductase chain 4 2</fullName>
        <ecNumber evidence="1">7.1.1.-</ecNumber>
    </recommendedName>
    <alternativeName>
        <fullName evidence="1">NAD(P)H dehydrogenase I, chain 4 2</fullName>
    </alternativeName>
    <alternativeName>
        <fullName evidence="1">NDH-1, chain 4 2</fullName>
    </alternativeName>
</protein>
<name>NU4C2_THEVB</name>
<keyword id="KW-0472">Membrane</keyword>
<keyword id="KW-0520">NAD</keyword>
<keyword id="KW-0521">NADP</keyword>
<keyword id="KW-0618">Plastoquinone</keyword>
<keyword id="KW-0874">Quinone</keyword>
<keyword id="KW-1185">Reference proteome</keyword>
<keyword id="KW-0793">Thylakoid</keyword>
<keyword id="KW-1278">Translocase</keyword>
<keyword id="KW-0812">Transmembrane</keyword>
<keyword id="KW-1133">Transmembrane helix</keyword>
<reference key="1">
    <citation type="journal article" date="2002" name="DNA Res.">
        <title>Complete genome structure of the thermophilic cyanobacterium Thermosynechococcus elongatus BP-1.</title>
        <authorList>
            <person name="Nakamura Y."/>
            <person name="Kaneko T."/>
            <person name="Sato S."/>
            <person name="Ikeuchi M."/>
            <person name="Katoh H."/>
            <person name="Sasamoto S."/>
            <person name="Watanabe A."/>
            <person name="Iriguchi M."/>
            <person name="Kawashima K."/>
            <person name="Kimura T."/>
            <person name="Kishida Y."/>
            <person name="Kiyokawa C."/>
            <person name="Kohara M."/>
            <person name="Matsumoto M."/>
            <person name="Matsuno A."/>
            <person name="Nakazaki N."/>
            <person name="Shimpo S."/>
            <person name="Sugimoto M."/>
            <person name="Takeuchi C."/>
            <person name="Yamada M."/>
            <person name="Tabata S."/>
        </authorList>
    </citation>
    <scope>NUCLEOTIDE SEQUENCE [LARGE SCALE GENOMIC DNA]</scope>
    <source>
        <strain>NIES-2133 / IAM M-273 / BP-1</strain>
    </source>
</reference>
<proteinExistence type="inferred from homology"/>
<accession>Q8DHX4</accession>
<gene>
    <name evidence="1" type="primary">ndhD2</name>
    <name type="ordered locus">tlr1819</name>
</gene>
<comment type="function">
    <text evidence="1">NDH-1 shuttles electrons from NAD(P)H, via FMN and iron-sulfur (Fe-S) centers, to quinones in the respiratory chain. The immediate electron acceptor for the enzyme in this species is believed to be plastoquinone. Couples the redox reaction to proton translocation (for every two electrons transferred, four hydrogen ions are translocated across the cytoplasmic membrane), and thus conserves the redox energy in a proton gradient.</text>
</comment>
<comment type="catalytic activity">
    <reaction evidence="1">
        <text>a plastoquinone + NADH + (n+1) H(+)(in) = a plastoquinol + NAD(+) + n H(+)(out)</text>
        <dbReference type="Rhea" id="RHEA:42608"/>
        <dbReference type="Rhea" id="RHEA-COMP:9561"/>
        <dbReference type="Rhea" id="RHEA-COMP:9562"/>
        <dbReference type="ChEBI" id="CHEBI:15378"/>
        <dbReference type="ChEBI" id="CHEBI:17757"/>
        <dbReference type="ChEBI" id="CHEBI:57540"/>
        <dbReference type="ChEBI" id="CHEBI:57945"/>
        <dbReference type="ChEBI" id="CHEBI:62192"/>
    </reaction>
</comment>
<comment type="catalytic activity">
    <reaction evidence="1">
        <text>a plastoquinone + NADPH + (n+1) H(+)(in) = a plastoquinol + NADP(+) + n H(+)(out)</text>
        <dbReference type="Rhea" id="RHEA:42612"/>
        <dbReference type="Rhea" id="RHEA-COMP:9561"/>
        <dbReference type="Rhea" id="RHEA-COMP:9562"/>
        <dbReference type="ChEBI" id="CHEBI:15378"/>
        <dbReference type="ChEBI" id="CHEBI:17757"/>
        <dbReference type="ChEBI" id="CHEBI:57783"/>
        <dbReference type="ChEBI" id="CHEBI:58349"/>
        <dbReference type="ChEBI" id="CHEBI:62192"/>
    </reaction>
</comment>
<comment type="subcellular location">
    <subcellularLocation>
        <location evidence="1">Cellular thylakoid membrane</location>
        <topology evidence="1">Multi-pass membrane protein</topology>
    </subcellularLocation>
</comment>
<comment type="similarity">
    <text evidence="1">Belongs to the complex I subunit 4 family.</text>
</comment>
<evidence type="ECO:0000255" key="1">
    <source>
        <dbReference type="HAMAP-Rule" id="MF_00491"/>
    </source>
</evidence>